<evidence type="ECO:0000250" key="1">
    <source>
        <dbReference type="UniProtKB" id="P36873"/>
    </source>
</evidence>
<evidence type="ECO:0000255" key="2"/>
<evidence type="ECO:0000255" key="3">
    <source>
        <dbReference type="PROSITE-ProRule" id="PRU00448"/>
    </source>
</evidence>
<evidence type="ECO:0000255" key="4">
    <source>
        <dbReference type="RuleBase" id="RU004273"/>
    </source>
</evidence>
<evidence type="ECO:0000256" key="5">
    <source>
        <dbReference type="SAM" id="MobiDB-lite"/>
    </source>
</evidence>
<evidence type="ECO:0000269" key="6">
    <source>
    </source>
</evidence>
<evidence type="ECO:0000303" key="7">
    <source>
    </source>
</evidence>
<evidence type="ECO:0000303" key="8">
    <source>
    </source>
</evidence>
<evidence type="ECO:0000305" key="9"/>
<evidence type="ECO:0000312" key="10">
    <source>
        <dbReference type="EMBL" id="AAB82794.1"/>
    </source>
</evidence>
<evidence type="ECO:0000312" key="11">
    <source>
        <dbReference type="Proteomes" id="UP000001940"/>
    </source>
</evidence>
<evidence type="ECO:0000312" key="12">
    <source>
        <dbReference type="WormBase" id="F23H11.8a"/>
    </source>
</evidence>
<evidence type="ECO:0000312" key="13">
    <source>
        <dbReference type="WormBase" id="F23H11.8b"/>
    </source>
</evidence>
<evidence type="ECO:0000312" key="14">
    <source>
        <dbReference type="WormBase" id="F23H11.8c"/>
    </source>
</evidence>
<feature type="initiator methionine" description="Removed" evidence="6">
    <location>
        <position position="1"/>
    </location>
</feature>
<feature type="chain" id="PRO_0000436235" description="Serine/threonine-protein phosphatase with EF-hands pef-1" evidence="9">
    <location>
        <begin position="2"/>
        <end position="707"/>
    </location>
</feature>
<feature type="domain" description="IQ" evidence="2">
    <location>
        <begin position="81"/>
        <end position="103"/>
    </location>
</feature>
<feature type="domain" description="EF-hand 1" evidence="3">
    <location>
        <begin position="546"/>
        <end position="581"/>
    </location>
</feature>
<feature type="domain" description="EF-hand 2" evidence="3">
    <location>
        <begin position="629"/>
        <end position="664"/>
    </location>
</feature>
<feature type="domain" description="EF-hand 3" evidence="3">
    <location>
        <begin position="669"/>
        <end position="704"/>
    </location>
</feature>
<feature type="region of interest" description="Disordered" evidence="5">
    <location>
        <begin position="1"/>
        <end position="82"/>
    </location>
</feature>
<feature type="region of interest" description="Catalytic" evidence="9">
    <location>
        <begin position="205"/>
        <end position="518"/>
    </location>
</feature>
<feature type="compositionally biased region" description="Low complexity" evidence="5">
    <location>
        <begin position="21"/>
        <end position="58"/>
    </location>
</feature>
<feature type="compositionally biased region" description="Basic residues" evidence="5">
    <location>
        <begin position="59"/>
        <end position="73"/>
    </location>
</feature>
<feature type="active site" description="Proton donor" evidence="1">
    <location>
        <position position="318"/>
    </location>
</feature>
<feature type="binding site" evidence="1">
    <location>
        <position position="256"/>
    </location>
    <ligand>
        <name>Mn(2+)</name>
        <dbReference type="ChEBI" id="CHEBI:29035"/>
        <label>1</label>
    </ligand>
</feature>
<feature type="binding site" evidence="1">
    <location>
        <position position="258"/>
    </location>
    <ligand>
        <name>Mn(2+)</name>
        <dbReference type="ChEBI" id="CHEBI:29035"/>
        <label>1</label>
    </ligand>
</feature>
<feature type="binding site" evidence="1">
    <location>
        <position position="285"/>
    </location>
    <ligand>
        <name>Mn(2+)</name>
        <dbReference type="ChEBI" id="CHEBI:29035"/>
        <label>1</label>
    </ligand>
</feature>
<feature type="binding site" evidence="1">
    <location>
        <position position="285"/>
    </location>
    <ligand>
        <name>Mn(2+)</name>
        <dbReference type="ChEBI" id="CHEBI:29035"/>
        <label>2</label>
    </ligand>
</feature>
<feature type="binding site" evidence="1">
    <location>
        <position position="317"/>
    </location>
    <ligand>
        <name>Mn(2+)</name>
        <dbReference type="ChEBI" id="CHEBI:29035"/>
        <label>2</label>
    </ligand>
</feature>
<feature type="binding site" evidence="1">
    <location>
        <position position="369"/>
    </location>
    <ligand>
        <name>Mn(2+)</name>
        <dbReference type="ChEBI" id="CHEBI:29035"/>
        <label>2</label>
    </ligand>
</feature>
<feature type="binding site" evidence="1">
    <location>
        <position position="465"/>
    </location>
    <ligand>
        <name>Mn(2+)</name>
        <dbReference type="ChEBI" id="CHEBI:29035"/>
        <label>2</label>
    </ligand>
</feature>
<feature type="binding site" evidence="3 6">
    <location>
        <position position="642"/>
    </location>
    <ligand>
        <name>Ca(2+)</name>
        <dbReference type="ChEBI" id="CHEBI:29108"/>
        <label>1</label>
    </ligand>
</feature>
<feature type="binding site" evidence="3 6">
    <location>
        <position position="644"/>
    </location>
    <ligand>
        <name>Ca(2+)</name>
        <dbReference type="ChEBI" id="CHEBI:29108"/>
        <label>1</label>
    </ligand>
</feature>
<feature type="binding site" evidence="3 6">
    <location>
        <position position="646"/>
    </location>
    <ligand>
        <name>Ca(2+)</name>
        <dbReference type="ChEBI" id="CHEBI:29108"/>
        <label>1</label>
    </ligand>
</feature>
<feature type="binding site" evidence="3 6">
    <location>
        <position position="648"/>
    </location>
    <ligand>
        <name>Ca(2+)</name>
        <dbReference type="ChEBI" id="CHEBI:29108"/>
        <label>1</label>
    </ligand>
</feature>
<feature type="binding site" evidence="3 6">
    <location>
        <position position="653"/>
    </location>
    <ligand>
        <name>Ca(2+)</name>
        <dbReference type="ChEBI" id="CHEBI:29108"/>
        <label>1</label>
    </ligand>
</feature>
<feature type="binding site" evidence="3 6">
    <location>
        <position position="682"/>
    </location>
    <ligand>
        <name>Ca(2+)</name>
        <dbReference type="ChEBI" id="CHEBI:29108"/>
        <label>2</label>
    </ligand>
</feature>
<feature type="binding site" evidence="3 6">
    <location>
        <position position="684"/>
    </location>
    <ligand>
        <name>Ca(2+)</name>
        <dbReference type="ChEBI" id="CHEBI:29108"/>
        <label>2</label>
    </ligand>
</feature>
<feature type="binding site" evidence="3 6">
    <location>
        <position position="686"/>
    </location>
    <ligand>
        <name>Ca(2+)</name>
        <dbReference type="ChEBI" id="CHEBI:29108"/>
        <label>2</label>
    </ligand>
</feature>
<feature type="binding site" evidence="3 6">
    <location>
        <position position="693"/>
    </location>
    <ligand>
        <name>Ca(2+)</name>
        <dbReference type="ChEBI" id="CHEBI:29108"/>
        <label>2</label>
    </ligand>
</feature>
<feature type="lipid moiety-binding region" description="N-myristoyl glycine" evidence="6">
    <location>
        <position position="2"/>
    </location>
</feature>
<feature type="lipid moiety-binding region" description="S-palmitoyl cysteine" evidence="6">
    <location>
        <position position="3"/>
    </location>
</feature>
<feature type="splice variant" id="VSP_058324" description="In isoform b." evidence="9">
    <location>
        <begin position="1"/>
        <end position="135"/>
    </location>
</feature>
<feature type="splice variant" id="VSP_058325" description="In isoform c." evidence="9">
    <location>
        <begin position="17"/>
        <end position="81"/>
    </location>
</feature>
<feature type="mutagenesis site" description="Loss of palmitoylation and myristoylation resulting in loss of association with the cell membrane. Severe loss of axonal, dendritic and cilia localization in AWC, AWB and BAG neurons." evidence="6">
    <original>G</original>
    <variation>A</variation>
    <location>
        <position position="2"/>
    </location>
</feature>
<feature type="mutagenesis site" description="Loss of palmitoylation resulting in loss of association with the cell membrane. Moderate loss of axonal, dendritic and cilia localization in AWC, AWB and BAG neurons." evidence="6">
    <original>C</original>
    <variation>S</variation>
    <location>
        <position position="3"/>
    </location>
</feature>
<dbReference type="EC" id="3.1.3.16" evidence="4"/>
<dbReference type="EMBL" id="AF023454">
    <property type="protein sequence ID" value="AAB82794.1"/>
    <property type="molecule type" value="mRNA"/>
</dbReference>
<dbReference type="EMBL" id="BX284603">
    <property type="protein sequence ID" value="CCD69949.1"/>
    <property type="molecule type" value="Genomic_DNA"/>
</dbReference>
<dbReference type="EMBL" id="BX284603">
    <property type="protein sequence ID" value="CCD69950.1"/>
    <property type="molecule type" value="Genomic_DNA"/>
</dbReference>
<dbReference type="EMBL" id="BX284603">
    <property type="protein sequence ID" value="CCD69954.1"/>
    <property type="molecule type" value="Genomic_DNA"/>
</dbReference>
<dbReference type="PIR" id="T34072">
    <property type="entry name" value="T34072"/>
</dbReference>
<dbReference type="PIR" id="T42239">
    <property type="entry name" value="T42239"/>
</dbReference>
<dbReference type="RefSeq" id="NP_001022545.1">
    <property type="nucleotide sequence ID" value="NM_001027374.2"/>
</dbReference>
<dbReference type="RefSeq" id="NP_001254836.1">
    <molecule id="G5EBX9-3"/>
    <property type="nucleotide sequence ID" value="NM_001267907.3"/>
</dbReference>
<dbReference type="RefSeq" id="NP_001379892.1">
    <molecule id="G5EBX9-2"/>
    <property type="nucleotide sequence ID" value="NM_001393271.1"/>
</dbReference>
<dbReference type="RefSeq" id="NP_741091.1">
    <molecule id="G5EBX9-1"/>
    <property type="nucleotide sequence ID" value="NM_171080.7"/>
</dbReference>
<dbReference type="SMR" id="G5EBX9"/>
<dbReference type="FunCoup" id="G5EBX9">
    <property type="interactions" value="102"/>
</dbReference>
<dbReference type="STRING" id="6239.F23H11.8a.1"/>
<dbReference type="iPTMnet" id="G5EBX9"/>
<dbReference type="SwissPalm" id="G5EBX9"/>
<dbReference type="PaxDb" id="6239-F23H11.8a"/>
<dbReference type="PeptideAtlas" id="G5EBX9"/>
<dbReference type="EnsemblMetazoa" id="F23H11.8a.1">
    <molecule id="G5EBX9-1"/>
    <property type="protein sequence ID" value="F23H11.8a.1"/>
    <property type="gene ID" value="WBGene00003969"/>
</dbReference>
<dbReference type="EnsemblMetazoa" id="F23H11.8b.1">
    <molecule id="G5EBX9-2"/>
    <property type="protein sequence ID" value="F23H11.8b.1"/>
    <property type="gene ID" value="WBGene00003969"/>
</dbReference>
<dbReference type="EnsemblMetazoa" id="F23H11.8b.2">
    <molecule id="G5EBX9-2"/>
    <property type="protein sequence ID" value="F23H11.8b.2"/>
    <property type="gene ID" value="WBGene00003969"/>
</dbReference>
<dbReference type="EnsemblMetazoa" id="F23H11.8c.1">
    <molecule id="G5EBX9-3"/>
    <property type="protein sequence ID" value="F23H11.8c.1"/>
    <property type="gene ID" value="WBGene00003969"/>
</dbReference>
<dbReference type="GeneID" id="175257"/>
<dbReference type="KEGG" id="cel:CELE_F23H11.8"/>
<dbReference type="UCSC" id="F23H11.8a">
    <property type="organism name" value="c. elegans"/>
</dbReference>
<dbReference type="AGR" id="WB:WBGene00003969"/>
<dbReference type="CTD" id="175257"/>
<dbReference type="WormBase" id="F23H11.8a">
    <molecule id="G5EBX9-1"/>
    <property type="protein sequence ID" value="CE27999"/>
    <property type="gene ID" value="WBGene00003969"/>
    <property type="gene designation" value="pef-1"/>
</dbReference>
<dbReference type="WormBase" id="F23H11.8b">
    <molecule id="G5EBX9-2"/>
    <property type="protein sequence ID" value="CE30662"/>
    <property type="gene ID" value="WBGene00003969"/>
    <property type="gene designation" value="pef-1"/>
</dbReference>
<dbReference type="WormBase" id="F23H11.8c">
    <molecule id="G5EBX9-3"/>
    <property type="protein sequence ID" value="CE43732"/>
    <property type="gene ID" value="WBGene00003969"/>
    <property type="gene designation" value="pef-1"/>
</dbReference>
<dbReference type="eggNOG" id="KOG0377">
    <property type="taxonomic scope" value="Eukaryota"/>
</dbReference>
<dbReference type="GeneTree" id="ENSGT00940000169749"/>
<dbReference type="InParanoid" id="G5EBX9"/>
<dbReference type="OMA" id="CRENKVR"/>
<dbReference type="OrthoDB" id="442428at2759"/>
<dbReference type="PhylomeDB" id="G5EBX9"/>
<dbReference type="Reactome" id="R-CEL-2514859">
    <property type="pathway name" value="Inactivation, recovery and regulation of the phototransduction cascade"/>
</dbReference>
<dbReference type="PRO" id="PR:G5EBX9"/>
<dbReference type="Proteomes" id="UP000001940">
    <property type="component" value="Chromosome III"/>
</dbReference>
<dbReference type="Bgee" id="WBGene00003969">
    <property type="expression patterns" value="Expressed in larva and 3 other cell types or tissues"/>
</dbReference>
<dbReference type="GO" id="GO:0030424">
    <property type="term" value="C:axon"/>
    <property type="evidence" value="ECO:0007669"/>
    <property type="project" value="UniProtKB-SubCell"/>
</dbReference>
<dbReference type="GO" id="GO:0005929">
    <property type="term" value="C:cilium"/>
    <property type="evidence" value="ECO:0007669"/>
    <property type="project" value="UniProtKB-SubCell"/>
</dbReference>
<dbReference type="GO" id="GO:0005829">
    <property type="term" value="C:cytosol"/>
    <property type="evidence" value="ECO:0000318"/>
    <property type="project" value="GO_Central"/>
</dbReference>
<dbReference type="GO" id="GO:0030425">
    <property type="term" value="C:dendrite"/>
    <property type="evidence" value="ECO:0007669"/>
    <property type="project" value="UniProtKB-SubCell"/>
</dbReference>
<dbReference type="GO" id="GO:0043025">
    <property type="term" value="C:neuronal cell body"/>
    <property type="evidence" value="ECO:0000314"/>
    <property type="project" value="WormBase"/>
</dbReference>
<dbReference type="GO" id="GO:0005634">
    <property type="term" value="C:nucleus"/>
    <property type="evidence" value="ECO:0000318"/>
    <property type="project" value="GO_Central"/>
</dbReference>
<dbReference type="GO" id="GO:0043204">
    <property type="term" value="C:perikaryon"/>
    <property type="evidence" value="ECO:0007669"/>
    <property type="project" value="UniProtKB-SubCell"/>
</dbReference>
<dbReference type="GO" id="GO:0005886">
    <property type="term" value="C:plasma membrane"/>
    <property type="evidence" value="ECO:0007669"/>
    <property type="project" value="UniProtKB-SubCell"/>
</dbReference>
<dbReference type="GO" id="GO:0005509">
    <property type="term" value="F:calcium ion binding"/>
    <property type="evidence" value="ECO:0007669"/>
    <property type="project" value="InterPro"/>
</dbReference>
<dbReference type="GO" id="GO:0005506">
    <property type="term" value="F:iron ion binding"/>
    <property type="evidence" value="ECO:0007669"/>
    <property type="project" value="InterPro"/>
</dbReference>
<dbReference type="GO" id="GO:0030145">
    <property type="term" value="F:manganese ion binding"/>
    <property type="evidence" value="ECO:0007669"/>
    <property type="project" value="InterPro"/>
</dbReference>
<dbReference type="GO" id="GO:0004722">
    <property type="term" value="F:protein serine/threonine phosphatase activity"/>
    <property type="evidence" value="ECO:0000318"/>
    <property type="project" value="GO_Central"/>
</dbReference>
<dbReference type="GO" id="GO:0050906">
    <property type="term" value="P:detection of stimulus involved in sensory perception"/>
    <property type="evidence" value="ECO:0007669"/>
    <property type="project" value="InterPro"/>
</dbReference>
<dbReference type="CDD" id="cd00051">
    <property type="entry name" value="EFh"/>
    <property type="match status" value="1"/>
</dbReference>
<dbReference type="CDD" id="cd07420">
    <property type="entry name" value="MPP_RdgC"/>
    <property type="match status" value="1"/>
</dbReference>
<dbReference type="FunFam" id="1.10.238.10:FF:000540">
    <property type="entry name" value="Serine/threonine-protein phosphatase with EF-hands"/>
    <property type="match status" value="1"/>
</dbReference>
<dbReference type="FunFam" id="3.60.21.10:FF:000141">
    <property type="entry name" value="Serine/threonine-protein phosphatase with EF-hands"/>
    <property type="match status" value="1"/>
</dbReference>
<dbReference type="Gene3D" id="3.60.21.10">
    <property type="match status" value="1"/>
</dbReference>
<dbReference type="Gene3D" id="1.10.238.10">
    <property type="entry name" value="EF-hand"/>
    <property type="match status" value="1"/>
</dbReference>
<dbReference type="InterPro" id="IPR004843">
    <property type="entry name" value="Calcineurin-like_PHP_ApaH"/>
</dbReference>
<dbReference type="InterPro" id="IPR011992">
    <property type="entry name" value="EF-hand-dom_pair"/>
</dbReference>
<dbReference type="InterPro" id="IPR018247">
    <property type="entry name" value="EF_Hand_1_Ca_BS"/>
</dbReference>
<dbReference type="InterPro" id="IPR002048">
    <property type="entry name" value="EF_hand_dom"/>
</dbReference>
<dbReference type="InterPro" id="IPR029052">
    <property type="entry name" value="Metallo-depent_PP-like"/>
</dbReference>
<dbReference type="InterPro" id="IPR013235">
    <property type="entry name" value="PPP_dom"/>
</dbReference>
<dbReference type="InterPro" id="IPR051134">
    <property type="entry name" value="PPP_phosphatase"/>
</dbReference>
<dbReference type="InterPro" id="IPR012008">
    <property type="entry name" value="Ser/Thr-Pase_EF-hand_contain"/>
</dbReference>
<dbReference type="InterPro" id="IPR006186">
    <property type="entry name" value="Ser/Thr-sp_prot-phosphatase"/>
</dbReference>
<dbReference type="PANTHER" id="PTHR45668">
    <property type="entry name" value="SERINE/THREONINE-PROTEIN PHOSPHATASE 5-RELATED"/>
    <property type="match status" value="1"/>
</dbReference>
<dbReference type="PANTHER" id="PTHR45668:SF3">
    <property type="entry name" value="SERINE_THREONINE-PROTEIN PHOSPHATASE RDGC"/>
    <property type="match status" value="1"/>
</dbReference>
<dbReference type="Pfam" id="PF13499">
    <property type="entry name" value="EF-hand_7"/>
    <property type="match status" value="1"/>
</dbReference>
<dbReference type="Pfam" id="PF00149">
    <property type="entry name" value="Metallophos"/>
    <property type="match status" value="1"/>
</dbReference>
<dbReference type="Pfam" id="PF08321">
    <property type="entry name" value="PPP5"/>
    <property type="match status" value="1"/>
</dbReference>
<dbReference type="PIRSF" id="PIRSF000912">
    <property type="entry name" value="PPEF"/>
    <property type="match status" value="1"/>
</dbReference>
<dbReference type="PRINTS" id="PR00114">
    <property type="entry name" value="STPHPHTASE"/>
</dbReference>
<dbReference type="SMART" id="SM00054">
    <property type="entry name" value="EFh"/>
    <property type="match status" value="3"/>
</dbReference>
<dbReference type="SMART" id="SM00156">
    <property type="entry name" value="PP2Ac"/>
    <property type="match status" value="1"/>
</dbReference>
<dbReference type="SUPFAM" id="SSF47473">
    <property type="entry name" value="EF-hand"/>
    <property type="match status" value="1"/>
</dbReference>
<dbReference type="SUPFAM" id="SSF56300">
    <property type="entry name" value="Metallo-dependent phosphatases"/>
    <property type="match status" value="1"/>
</dbReference>
<dbReference type="PROSITE" id="PS00018">
    <property type="entry name" value="EF_HAND_1"/>
    <property type="match status" value="2"/>
</dbReference>
<dbReference type="PROSITE" id="PS50222">
    <property type="entry name" value="EF_HAND_2"/>
    <property type="match status" value="3"/>
</dbReference>
<dbReference type="PROSITE" id="PS00125">
    <property type="entry name" value="SER_THR_PHOSPHATASE"/>
    <property type="match status" value="1"/>
</dbReference>
<reference evidence="10" key="1">
    <citation type="journal article" date="1997" name="Proc. Natl. Acad. Sci. U.S.A.">
        <title>Identification and characterization of a conserved family of protein serine/threonine phosphatases homologous to Drosophila retinal degeneration C.</title>
        <authorList>
            <person name="Sherman P.M."/>
            <person name="Sun H."/>
            <person name="Macke J.P."/>
            <person name="Williams J."/>
            <person name="Smallwood P.M."/>
            <person name="Nathans J."/>
        </authorList>
    </citation>
    <scope>NUCLEOTIDE SEQUENCE [MRNA] (ISOFORM A)</scope>
</reference>
<reference evidence="11" key="2">
    <citation type="journal article" date="1998" name="Science">
        <title>Genome sequence of the nematode C. elegans: a platform for investigating biology.</title>
        <authorList>
            <consortium name="The C. elegans sequencing consortium"/>
        </authorList>
    </citation>
    <scope>NUCLEOTIDE SEQUENCE [LARGE SCALE GENOMIC DNA]</scope>
    <source>
        <strain evidence="11">Bristol N2</strain>
    </source>
</reference>
<reference evidence="9" key="3">
    <citation type="journal article" date="2001" name="J. Biol. Chem.">
        <title>Cellular and subcellular localization, N-terminal acylation, and calcium binding of Caenorhabditis elegans protein phosphatase with EF-hands.</title>
        <authorList>
            <person name="Ramulu P."/>
            <person name="Nathans J."/>
        </authorList>
    </citation>
    <scope>SUBCELLULAR LOCATION</scope>
    <scope>TISSUE SPECIFICITY</scope>
    <scope>CALCIUM-BINDING</scope>
    <scope>MYRISTOYLATION AT GLY-2</scope>
    <scope>PALMITOYLATION AT CYS-3</scope>
    <scope>MUTAGENESIS OF GLY-2 AND CYS-3</scope>
</reference>
<proteinExistence type="evidence at protein level"/>
<name>PPE_CAEEL</name>
<keyword id="KW-0025">Alternative splicing</keyword>
<keyword id="KW-0106">Calcium</keyword>
<keyword id="KW-1003">Cell membrane</keyword>
<keyword id="KW-0966">Cell projection</keyword>
<keyword id="KW-0378">Hydrolase</keyword>
<keyword id="KW-0449">Lipoprotein</keyword>
<keyword id="KW-0464">Manganese</keyword>
<keyword id="KW-0472">Membrane</keyword>
<keyword id="KW-0479">Metal-binding</keyword>
<keyword id="KW-0519">Myristate</keyword>
<keyword id="KW-0564">Palmitate</keyword>
<keyword id="KW-1185">Reference proteome</keyword>
<keyword id="KW-0677">Repeat</keyword>
<organism evidence="11">
    <name type="scientific">Caenorhabditis elegans</name>
    <dbReference type="NCBI Taxonomy" id="6239"/>
    <lineage>
        <taxon>Eukaryota</taxon>
        <taxon>Metazoa</taxon>
        <taxon>Ecdysozoa</taxon>
        <taxon>Nematoda</taxon>
        <taxon>Chromadorea</taxon>
        <taxon>Rhabditida</taxon>
        <taxon>Rhabditina</taxon>
        <taxon>Rhabditomorpha</taxon>
        <taxon>Rhabditoidea</taxon>
        <taxon>Rhabditidae</taxon>
        <taxon>Peloderinae</taxon>
        <taxon>Caenorhabditis</taxon>
    </lineage>
</organism>
<accession>G5EBX9</accession>
<accession>C3JXD7</accession>
<accession>Q8MYR2</accession>
<sequence>MGCGPSSGRQNPSTELKKSTRATTTTTSSSQRNNYNDNNQNTSSSSGNKKESSSSSKQHSSKKSKKSNSKKNRSPSPQPQLTIKSAILIQKWYRRCEARLEARRRATWQIFTALEYAGEQDQLKLYDFFADVIRAMAEENGKGGVENGRNSPLMSALSHYAKPSLMDSEGETVKKMLEDTSPTNVDIDRNYKGPTLSLPLDKPQVAKMIEAFKVNKVLHPKYVLMILHEARKIFKAMPSVSRISTSISNQVTICGDLHGKFDDLCIILYKNGYPSVDNPYIFNGDFVDRGGQSIEVLCVLFALVIVDPMSIYLNRGNHEDHIMNLRYGFIKELSTKYKDLSTPITRLLEDVFSWLPIATIIDRDIFVVHGGISDQTEVSKLDKIPRHRFQSVLRPPVNKGMESEKENSAVNVDEWKQMLDIMWSDPKQNKGCWPNVFRGGGSYFGADITASFLEKHGFRLLVRSHECKFEGYEFSHNNTCLTVFSASNYYETGSNRGAYVKFIGKSKQPHFVQYMASKTHRKSTLRERLGVVEESAVKELKEKLSSFHTDLQKEFEIMDIEKSGKLPILKWSDCVERITGLNLPWIALAPKVATLSEDGKYVMYKEDRRIAQVGGTHAQEKDIVESLYRHKSTLETLFRFMDKDNSGQVSMKEFIDACEVLGKYTKRPLQTDYISQIAESIDFNKDGFIDLNELLEAFRLVDRPLLR</sequence>
<comment type="function">
    <text evidence="9">Probably acts as a protein phosphatase.</text>
</comment>
<comment type="catalytic activity">
    <reaction evidence="4">
        <text>O-phospho-L-seryl-[protein] + H2O = L-seryl-[protein] + phosphate</text>
        <dbReference type="Rhea" id="RHEA:20629"/>
        <dbReference type="Rhea" id="RHEA-COMP:9863"/>
        <dbReference type="Rhea" id="RHEA-COMP:11604"/>
        <dbReference type="ChEBI" id="CHEBI:15377"/>
        <dbReference type="ChEBI" id="CHEBI:29999"/>
        <dbReference type="ChEBI" id="CHEBI:43474"/>
        <dbReference type="ChEBI" id="CHEBI:83421"/>
        <dbReference type="EC" id="3.1.3.16"/>
    </reaction>
</comment>
<comment type="catalytic activity">
    <reaction evidence="4">
        <text>O-phospho-L-threonyl-[protein] + H2O = L-threonyl-[protein] + phosphate</text>
        <dbReference type="Rhea" id="RHEA:47004"/>
        <dbReference type="Rhea" id="RHEA-COMP:11060"/>
        <dbReference type="Rhea" id="RHEA-COMP:11605"/>
        <dbReference type="ChEBI" id="CHEBI:15377"/>
        <dbReference type="ChEBI" id="CHEBI:30013"/>
        <dbReference type="ChEBI" id="CHEBI:43474"/>
        <dbReference type="ChEBI" id="CHEBI:61977"/>
        <dbReference type="EC" id="3.1.3.16"/>
    </reaction>
</comment>
<comment type="cofactor">
    <cofactor evidence="1">
        <name>Mn(2+)</name>
        <dbReference type="ChEBI" id="CHEBI:29035"/>
    </cofactor>
    <text evidence="1">Binds 2 manganese ions per subunit.</text>
</comment>
<comment type="subcellular location">
    <subcellularLocation>
        <location evidence="6">Cell membrane</location>
        <topology evidence="6">Lipid-anchor</topology>
    </subcellularLocation>
    <subcellularLocation>
        <location evidence="6">Perikaryon</location>
    </subcellularLocation>
    <subcellularLocation>
        <location evidence="6">Cell projection</location>
        <location evidence="6">Dendrite</location>
    </subcellularLocation>
    <subcellularLocation>
        <location evidence="6">Cell projection</location>
        <location evidence="6">Axon</location>
    </subcellularLocation>
    <subcellularLocation>
        <location evidence="6">Cell projection</location>
        <location evidence="6">Cilium</location>
    </subcellularLocation>
</comment>
<comment type="alternative products">
    <event type="alternative splicing"/>
    <isoform>
        <id>G5EBX9-1</id>
        <name evidence="12">a</name>
        <sequence type="displayed"/>
    </isoform>
    <isoform>
        <id>G5EBX9-2</id>
        <name evidence="13">b</name>
        <sequence type="described" ref="VSP_058324"/>
    </isoform>
    <isoform>
        <id>G5EBX9-3</id>
        <name evidence="14">c</name>
        <sequence type="described" ref="VSP_058325"/>
    </isoform>
</comment>
<comment type="tissue specificity">
    <text evidence="6">Expression is restricted to neurons. Expressed in AWB, AWC, AVA, AVB, AVX, BAG and URX neurons and in one tail neuron (at protein level).</text>
</comment>
<comment type="similarity">
    <text evidence="4">Belongs to the PPP phosphatase family.</text>
</comment>
<protein>
    <recommendedName>
        <fullName evidence="8">Serine/threonine-protein phosphatase with EF-hands pef-1</fullName>
        <shortName evidence="7">CePPEF</shortName>
        <ecNumber evidence="4">3.1.3.16</ecNumber>
    </recommendedName>
    <alternativeName>
        <fullName evidence="12">Phosphatase with EF hands 1</fullName>
    </alternativeName>
</protein>
<gene>
    <name evidence="12" type="primary">pef-1</name>
    <name evidence="12" type="ORF">F23H11.8</name>
</gene>